<proteinExistence type="evidence at protein level"/>
<protein>
    <recommendedName>
        <fullName>SLIT-ROBO Rho GTPase-activating protein 3</fullName>
        <shortName>srGAP3</shortName>
    </recommendedName>
    <alternativeName>
        <fullName>Rho GTPase-activating protein 14</fullName>
    </alternativeName>
    <alternativeName>
        <fullName>WAVE-associated Rac GTPase-activating protein</fullName>
        <shortName>WRP</shortName>
    </alternativeName>
</protein>
<evidence type="ECO:0000250" key="1"/>
<evidence type="ECO:0000250" key="2">
    <source>
        <dbReference type="UniProtKB" id="O43295"/>
    </source>
</evidence>
<evidence type="ECO:0000255" key="3"/>
<evidence type="ECO:0000255" key="4">
    <source>
        <dbReference type="PROSITE-ProRule" id="PRU00172"/>
    </source>
</evidence>
<evidence type="ECO:0000255" key="5">
    <source>
        <dbReference type="PROSITE-ProRule" id="PRU00192"/>
    </source>
</evidence>
<evidence type="ECO:0000255" key="6">
    <source>
        <dbReference type="PROSITE-ProRule" id="PRU01077"/>
    </source>
</evidence>
<evidence type="ECO:0000256" key="7">
    <source>
        <dbReference type="SAM" id="MobiDB-lite"/>
    </source>
</evidence>
<evidence type="ECO:0000305" key="8"/>
<evidence type="ECO:0007744" key="9">
    <source>
    </source>
</evidence>
<gene>
    <name type="primary">Srgap3</name>
    <name type="synonym">Arhgap14</name>
    <name type="synonym">Kiaa0411</name>
    <name type="synonym">Srgap2</name>
</gene>
<feature type="chain" id="PRO_0000056770" description="SLIT-ROBO Rho GTPase-activating protein 3">
    <location>
        <begin position="1"/>
        <end position="1099"/>
    </location>
</feature>
<feature type="domain" description="F-BAR" evidence="6">
    <location>
        <begin position="19"/>
        <end position="314"/>
    </location>
</feature>
<feature type="domain" description="Rho-GAP" evidence="4">
    <location>
        <begin position="506"/>
        <end position="694"/>
    </location>
</feature>
<feature type="domain" description="SH3" evidence="5">
    <location>
        <begin position="744"/>
        <end position="803"/>
    </location>
</feature>
<feature type="region of interest" description="Disordered" evidence="7">
    <location>
        <begin position="470"/>
        <end position="493"/>
    </location>
</feature>
<feature type="region of interest" description="Disordered" evidence="7">
    <location>
        <begin position="809"/>
        <end position="846"/>
    </location>
</feature>
<feature type="region of interest" description="Disordered" evidence="7">
    <location>
        <begin position="861"/>
        <end position="911"/>
    </location>
</feature>
<feature type="region of interest" description="Disordered" evidence="7">
    <location>
        <begin position="994"/>
        <end position="1014"/>
    </location>
</feature>
<feature type="region of interest" description="Disordered" evidence="7">
    <location>
        <begin position="1045"/>
        <end position="1099"/>
    </location>
</feature>
<feature type="coiled-coil region" evidence="3">
    <location>
        <begin position="352"/>
        <end position="392"/>
    </location>
</feature>
<feature type="coiled-coil region" evidence="3">
    <location>
        <begin position="952"/>
        <end position="987"/>
    </location>
</feature>
<feature type="compositionally biased region" description="Polar residues" evidence="7">
    <location>
        <begin position="809"/>
        <end position="820"/>
    </location>
</feature>
<feature type="compositionally biased region" description="Low complexity" evidence="7">
    <location>
        <begin position="1060"/>
        <end position="1074"/>
    </location>
</feature>
<feature type="compositionally biased region" description="Polar residues" evidence="7">
    <location>
        <begin position="1089"/>
        <end position="1099"/>
    </location>
</feature>
<feature type="site" description="Arginine finger; crucial for GTP hydrolysis by stabilizing the transition state" evidence="4">
    <location>
        <position position="542"/>
    </location>
</feature>
<feature type="modified residue" description="Phosphoserine" evidence="9">
    <location>
        <position position="817"/>
    </location>
</feature>
<feature type="modified residue" description="Phosphoserine" evidence="9">
    <location>
        <position position="820"/>
    </location>
</feature>
<feature type="modified residue" description="Phosphoserine" evidence="9">
    <location>
        <position position="821"/>
    </location>
</feature>
<feature type="modified residue" description="Phosphoserine" evidence="2">
    <location>
        <position position="837"/>
    </location>
</feature>
<feature type="modified residue" description="Phosphoserine" evidence="9">
    <location>
        <position position="858"/>
    </location>
</feature>
<feature type="modified residue" description="Phosphoserine" evidence="9">
    <location>
        <position position="954"/>
    </location>
</feature>
<feature type="sequence conflict" description="In Ref. 4; AAK52474." evidence="8" ref="4">
    <original>L</original>
    <variation>V</variation>
    <location>
        <position position="67"/>
    </location>
</feature>
<feature type="sequence conflict" description="In Ref. 4; AAK52474." evidence="8" ref="4">
    <original>N</original>
    <variation>T</variation>
    <location>
        <position position="122"/>
    </location>
</feature>
<feature type="sequence conflict" description="In Ref. 2; BAC65558." evidence="8" ref="2">
    <original>A</original>
    <variation>V</variation>
    <location>
        <position position="523"/>
    </location>
</feature>
<reference key="1">
    <citation type="journal article" date="2002" name="Nat. Cell Biol.">
        <title>The WRP component of the WAVE-1 complex attenuates Rac-mediated signalling.</title>
        <authorList>
            <person name="Soderling S.H."/>
            <person name="Binns K.L."/>
            <person name="Wayman G.A."/>
            <person name="Davee S.M."/>
            <person name="Ong S.H."/>
            <person name="Pawson T."/>
            <person name="Scott J.D."/>
        </authorList>
    </citation>
    <scope>NUCLEOTIDE SEQUENCE [MRNA]</scope>
    <source>
        <strain>BALB/cJ</strain>
        <tissue>Brain</tissue>
    </source>
</reference>
<reference key="2">
    <citation type="journal article" date="2003" name="DNA Res.">
        <title>Prediction of the coding sequences of mouse homologues of KIAA gene: II. The complete nucleotide sequences of 400 mouse KIAA-homologous cDNAs identified by screening of terminal sequences of cDNA clones randomly sampled from size-fractionated libraries.</title>
        <authorList>
            <person name="Okazaki N."/>
            <person name="Kikuno R."/>
            <person name="Ohara R."/>
            <person name="Inamoto S."/>
            <person name="Aizawa H."/>
            <person name="Yuasa S."/>
            <person name="Nakajima D."/>
            <person name="Nagase T."/>
            <person name="Ohara O."/>
            <person name="Koga H."/>
        </authorList>
    </citation>
    <scope>NUCLEOTIDE SEQUENCE [LARGE SCALE MRNA] OF 1-671</scope>
    <source>
        <tissue>Brain</tissue>
    </source>
</reference>
<reference key="3">
    <citation type="journal article" date="2005" name="Science">
        <title>The transcriptional landscape of the mammalian genome.</title>
        <authorList>
            <person name="Carninci P."/>
            <person name="Kasukawa T."/>
            <person name="Katayama S."/>
            <person name="Gough J."/>
            <person name="Frith M.C."/>
            <person name="Maeda N."/>
            <person name="Oyama R."/>
            <person name="Ravasi T."/>
            <person name="Lenhard B."/>
            <person name="Wells C."/>
            <person name="Kodzius R."/>
            <person name="Shimokawa K."/>
            <person name="Bajic V.B."/>
            <person name="Brenner S.E."/>
            <person name="Batalov S."/>
            <person name="Forrest A.R."/>
            <person name="Zavolan M."/>
            <person name="Davis M.J."/>
            <person name="Wilming L.G."/>
            <person name="Aidinis V."/>
            <person name="Allen J.E."/>
            <person name="Ambesi-Impiombato A."/>
            <person name="Apweiler R."/>
            <person name="Aturaliya R.N."/>
            <person name="Bailey T.L."/>
            <person name="Bansal M."/>
            <person name="Baxter L."/>
            <person name="Beisel K.W."/>
            <person name="Bersano T."/>
            <person name="Bono H."/>
            <person name="Chalk A.M."/>
            <person name="Chiu K.P."/>
            <person name="Choudhary V."/>
            <person name="Christoffels A."/>
            <person name="Clutterbuck D.R."/>
            <person name="Crowe M.L."/>
            <person name="Dalla E."/>
            <person name="Dalrymple B.P."/>
            <person name="de Bono B."/>
            <person name="Della Gatta G."/>
            <person name="di Bernardo D."/>
            <person name="Down T."/>
            <person name="Engstrom P."/>
            <person name="Fagiolini M."/>
            <person name="Faulkner G."/>
            <person name="Fletcher C.F."/>
            <person name="Fukushima T."/>
            <person name="Furuno M."/>
            <person name="Futaki S."/>
            <person name="Gariboldi M."/>
            <person name="Georgii-Hemming P."/>
            <person name="Gingeras T.R."/>
            <person name="Gojobori T."/>
            <person name="Green R.E."/>
            <person name="Gustincich S."/>
            <person name="Harbers M."/>
            <person name="Hayashi Y."/>
            <person name="Hensch T.K."/>
            <person name="Hirokawa N."/>
            <person name="Hill D."/>
            <person name="Huminiecki L."/>
            <person name="Iacono M."/>
            <person name="Ikeo K."/>
            <person name="Iwama A."/>
            <person name="Ishikawa T."/>
            <person name="Jakt M."/>
            <person name="Kanapin A."/>
            <person name="Katoh M."/>
            <person name="Kawasawa Y."/>
            <person name="Kelso J."/>
            <person name="Kitamura H."/>
            <person name="Kitano H."/>
            <person name="Kollias G."/>
            <person name="Krishnan S.P."/>
            <person name="Kruger A."/>
            <person name="Kummerfeld S.K."/>
            <person name="Kurochkin I.V."/>
            <person name="Lareau L.F."/>
            <person name="Lazarevic D."/>
            <person name="Lipovich L."/>
            <person name="Liu J."/>
            <person name="Liuni S."/>
            <person name="McWilliam S."/>
            <person name="Madan Babu M."/>
            <person name="Madera M."/>
            <person name="Marchionni L."/>
            <person name="Matsuda H."/>
            <person name="Matsuzawa S."/>
            <person name="Miki H."/>
            <person name="Mignone F."/>
            <person name="Miyake S."/>
            <person name="Morris K."/>
            <person name="Mottagui-Tabar S."/>
            <person name="Mulder N."/>
            <person name="Nakano N."/>
            <person name="Nakauchi H."/>
            <person name="Ng P."/>
            <person name="Nilsson R."/>
            <person name="Nishiguchi S."/>
            <person name="Nishikawa S."/>
            <person name="Nori F."/>
            <person name="Ohara O."/>
            <person name="Okazaki Y."/>
            <person name="Orlando V."/>
            <person name="Pang K.C."/>
            <person name="Pavan W.J."/>
            <person name="Pavesi G."/>
            <person name="Pesole G."/>
            <person name="Petrovsky N."/>
            <person name="Piazza S."/>
            <person name="Reed J."/>
            <person name="Reid J.F."/>
            <person name="Ring B.Z."/>
            <person name="Ringwald M."/>
            <person name="Rost B."/>
            <person name="Ruan Y."/>
            <person name="Salzberg S.L."/>
            <person name="Sandelin A."/>
            <person name="Schneider C."/>
            <person name="Schoenbach C."/>
            <person name="Sekiguchi K."/>
            <person name="Semple C.A."/>
            <person name="Seno S."/>
            <person name="Sessa L."/>
            <person name="Sheng Y."/>
            <person name="Shibata Y."/>
            <person name="Shimada H."/>
            <person name="Shimada K."/>
            <person name="Silva D."/>
            <person name="Sinclair B."/>
            <person name="Sperling S."/>
            <person name="Stupka E."/>
            <person name="Sugiura K."/>
            <person name="Sultana R."/>
            <person name="Takenaka Y."/>
            <person name="Taki K."/>
            <person name="Tammoja K."/>
            <person name="Tan S.L."/>
            <person name="Tang S."/>
            <person name="Taylor M.S."/>
            <person name="Tegner J."/>
            <person name="Teichmann S.A."/>
            <person name="Ueda H.R."/>
            <person name="van Nimwegen E."/>
            <person name="Verardo R."/>
            <person name="Wei C.L."/>
            <person name="Yagi K."/>
            <person name="Yamanishi H."/>
            <person name="Zabarovsky E."/>
            <person name="Zhu S."/>
            <person name="Zimmer A."/>
            <person name="Hide W."/>
            <person name="Bult C."/>
            <person name="Grimmond S.M."/>
            <person name="Teasdale R.D."/>
            <person name="Liu E.T."/>
            <person name="Brusic V."/>
            <person name="Quackenbush J."/>
            <person name="Wahlestedt C."/>
            <person name="Mattick J.S."/>
            <person name="Hume D.A."/>
            <person name="Kai C."/>
            <person name="Sasaki D."/>
            <person name="Tomaru Y."/>
            <person name="Fukuda S."/>
            <person name="Kanamori-Katayama M."/>
            <person name="Suzuki M."/>
            <person name="Aoki J."/>
            <person name="Arakawa T."/>
            <person name="Iida J."/>
            <person name="Imamura K."/>
            <person name="Itoh M."/>
            <person name="Kato T."/>
            <person name="Kawaji H."/>
            <person name="Kawagashira N."/>
            <person name="Kawashima T."/>
            <person name="Kojima M."/>
            <person name="Kondo S."/>
            <person name="Konno H."/>
            <person name="Nakano K."/>
            <person name="Ninomiya N."/>
            <person name="Nishio T."/>
            <person name="Okada M."/>
            <person name="Plessy C."/>
            <person name="Shibata K."/>
            <person name="Shiraki T."/>
            <person name="Suzuki S."/>
            <person name="Tagami M."/>
            <person name="Waki K."/>
            <person name="Watahiki A."/>
            <person name="Okamura-Oho Y."/>
            <person name="Suzuki H."/>
            <person name="Kawai J."/>
            <person name="Hayashizaki Y."/>
        </authorList>
    </citation>
    <scope>NUCLEOTIDE SEQUENCE [LARGE SCALE MRNA] OF 1-471</scope>
    <source>
        <strain>C57BL/6J</strain>
        <tissue>Spinal ganglion</tissue>
    </source>
</reference>
<reference key="4">
    <citation type="submission" date="2001-01" db="EMBL/GenBank/DDBJ databases">
        <title>Identification of a novel RhoGAP through analysis of an ecotropic MuLV integration site.</title>
        <authorList>
            <person name="Crowley M.R."/>
            <person name="Slon K.E."/>
            <person name="Nowak N.J."/>
            <person name="Asch H.L."/>
            <person name="Asch B.B."/>
        </authorList>
    </citation>
    <scope>NUCLEOTIDE SEQUENCE [MRNA] OF 27-1099</scope>
    <source>
        <strain>BALB/cJ</strain>
    </source>
</reference>
<reference key="5">
    <citation type="journal article" date="2004" name="Mol. Cell. Proteomics">
        <title>Phosphoproteomic analysis of the developing mouse brain.</title>
        <authorList>
            <person name="Ballif B.A."/>
            <person name="Villen J."/>
            <person name="Beausoleil S.A."/>
            <person name="Schwartz D."/>
            <person name="Gygi S.P."/>
        </authorList>
    </citation>
    <scope>IDENTIFICATION BY MASS SPECTROMETRY [LARGE SCALE ANALYSIS]</scope>
    <source>
        <tissue>Embryonic brain</tissue>
    </source>
</reference>
<reference key="6">
    <citation type="journal article" date="2010" name="Cell">
        <title>A tissue-specific atlas of mouse protein phosphorylation and expression.</title>
        <authorList>
            <person name="Huttlin E.L."/>
            <person name="Jedrychowski M.P."/>
            <person name="Elias J.E."/>
            <person name="Goswami T."/>
            <person name="Rad R."/>
            <person name="Beausoleil S.A."/>
            <person name="Villen J."/>
            <person name="Haas W."/>
            <person name="Sowa M.E."/>
            <person name="Gygi S.P."/>
        </authorList>
    </citation>
    <scope>PHOSPHORYLATION [LARGE SCALE ANALYSIS] AT SER-817; SER-820; SER-821; SER-858 AND SER-954</scope>
    <scope>IDENTIFICATION BY MASS SPECTROMETRY [LARGE SCALE ANALYSIS]</scope>
    <source>
        <tissue>Brain</tissue>
        <tissue>Testis</tissue>
    </source>
</reference>
<name>SRGP3_MOUSE</name>
<organism>
    <name type="scientific">Mus musculus</name>
    <name type="common">Mouse</name>
    <dbReference type="NCBI Taxonomy" id="10090"/>
    <lineage>
        <taxon>Eukaryota</taxon>
        <taxon>Metazoa</taxon>
        <taxon>Chordata</taxon>
        <taxon>Craniata</taxon>
        <taxon>Vertebrata</taxon>
        <taxon>Euteleostomi</taxon>
        <taxon>Mammalia</taxon>
        <taxon>Eutheria</taxon>
        <taxon>Euarchontoglires</taxon>
        <taxon>Glires</taxon>
        <taxon>Rodentia</taxon>
        <taxon>Myomorpha</taxon>
        <taxon>Muroidea</taxon>
        <taxon>Muridae</taxon>
        <taxon>Murinae</taxon>
        <taxon>Mus</taxon>
        <taxon>Mus</taxon>
    </lineage>
</organism>
<accession>Q812A2</accession>
<accession>Q80U09</accession>
<accession>Q8BKP4</accession>
<accession>Q8BLD0</accession>
<accession>Q925I2</accession>
<comment type="function">
    <text evidence="1">GTPase-activating protein for RAC1 and perhaps CDC42, but not for RhoA small GTPase. May attenuate RAC1 signaling in neurons (By similarity).</text>
</comment>
<comment type="subunit">
    <text evidence="1 8">Homodimer (Probable). Forms a heterooligomer with SRGAP1 and SRGAP2 through its F-BAR domain. Interacts with WASF1. Probably interacts with ROBO1. Interacts with FASLG (By similarity).</text>
</comment>
<comment type="domain">
    <text evidence="1">The F-BAR domain mediates oligomerization, binds membranes, and induces plasma membrane protrusions.</text>
</comment>
<comment type="sequence caution" evidence="8">
    <conflict type="erroneous initiation">
        <sequence resource="EMBL-CDS" id="AAK52474"/>
    </conflict>
    <text>Truncated N-terminus.</text>
</comment>
<comment type="sequence caution" evidence="8">
    <conflict type="frameshift">
        <sequence resource="EMBL-CDS" id="AAK52474"/>
    </conflict>
</comment>
<comment type="sequence caution" evidence="8">
    <conflict type="miscellaneous discrepancy">
        <sequence resource="EMBL-CDS" id="BAC34580"/>
    </conflict>
    <text>Intron retention.</text>
</comment>
<comment type="sequence caution" evidence="8">
    <conflict type="erroneous initiation">
        <sequence resource="EMBL-CDS" id="BAC65558"/>
    </conflict>
    <text>Extended N-terminus.</text>
</comment>
<comment type="sequence caution" evidence="8">
    <conflict type="miscellaneous discrepancy">
        <sequence resource="EMBL-CDS" id="BAC65558"/>
    </conflict>
    <text>Probable cloning artifact. Aberrant splice sites.</text>
</comment>
<sequence length="1099" mass="124420">MSSQTKFKKDKEIIAEYEAQIKEIRTQLVEQFKCLEQQSESRLQLLQDLQEFFRRKAEIELEYSRSLEKLAERFSSKIRSSREHQFKKDQYLLSPVNCWYLVLHQTRRESRDHATLNDIFMNNVIVRLSQISEDVIRLFKKSKEIGLQMHEELLKVTNELYTVMKTYHMYHAESISAESKLKEAEKQEEKQFNKSGELSMNLLRHEDRPQRRSSVKKIEKMKEKRQAKYSENKLKCTKARNDYLLNLAATNAAISKYYIHDVSDLIDCCDLGFHASLARTFRTYLSAEYNLETSRHEGLDVIENAVDNLDSRSDKHTVMDMCSQVFCPPLKFEFQPHMGDEVCQVSAQQPVQTELLMRYHQLQSRLATLKIENEEVRKTLDATMQTLQDMLTVEDFDVSDAFQHSRSTESIKSAASETYMSKINIAKRRANQQETEMFYFTKFKEYVNGSNLITKLQAKHDLLKQTLGEGERAECGTTRPPCLPPKPQKMRRPRPLSVYSHKLFNGSMEAFIKDSGQAIPLVAESCIRFINLYGLQQQGIFRVPGSQVEVNDIKNSFERGEDPLVDDQNERDINSVAGVLKLYFRGLENPLFPKERFQDLISTIKLENPADRVHPIQQILITLPRVVIVVMRYLFAFLNHLSQYSDENMMDPYNLAICFGPTLMHIPDGQDPVSCQAHVNEVIKTIIIHHEAIFPSPRELEGPVYEKCMAGGEEYCDSPHSEPGTIDEVDHDNGTEPHTSDEEVEQIEAIAKFDYVGRSPRELSFKKGASLLLYHRASEDWWEGRHNGVDGLIPHQYIVVQDMDDAFSDSLSQKADSEASSGPLLDDKASSKNDLQSPTEHISDYGFGGVMGRVRLRSDGAAIPRRRSGGDTHSPPRGLGPSIDTPPRAAACPSSPHKIPLSRGRIESPEKRRMATFGSAGSINYPDKKALTEGLSMRSTCGSTRHSSLGDHKSLEAEALAEDIEKTMSTALHELRELERQNTVKQAPDVVLDTLEPLKNPPGPISSEPASPLHTIVIRDPDAAMRRSSSSSTEMMTTFKPALSARLAGAQLRPPPMRPVRPVVQHRSSSSSSSGVGSPAVTPTEKMFPNSSSDKSGTM</sequence>
<dbReference type="EMBL" id="AF496547">
    <property type="protein sequence ID" value="AAM46845.1"/>
    <property type="molecule type" value="mRNA"/>
</dbReference>
<dbReference type="EMBL" id="AK122276">
    <property type="protein sequence ID" value="BAC65558.1"/>
    <property type="status" value="ALT_SEQ"/>
    <property type="molecule type" value="mRNA"/>
</dbReference>
<dbReference type="EMBL" id="AK045508">
    <property type="protein sequence ID" value="BAC32400.1"/>
    <property type="molecule type" value="mRNA"/>
</dbReference>
<dbReference type="EMBL" id="AK051262">
    <property type="protein sequence ID" value="BAC34580.1"/>
    <property type="status" value="ALT_SEQ"/>
    <property type="molecule type" value="mRNA"/>
</dbReference>
<dbReference type="EMBL" id="AF338472">
    <property type="protein sequence ID" value="AAK52474.1"/>
    <property type="status" value="ALT_FRAME"/>
    <property type="molecule type" value="mRNA"/>
</dbReference>
<dbReference type="CCDS" id="CCDS39590.1"/>
<dbReference type="RefSeq" id="NP_536696.4">
    <property type="nucleotide sequence ID" value="NM_080448.4"/>
</dbReference>
<dbReference type="SMR" id="Q812A2"/>
<dbReference type="BioGRID" id="234422">
    <property type="interactions" value="18"/>
</dbReference>
<dbReference type="FunCoup" id="Q812A2">
    <property type="interactions" value="889"/>
</dbReference>
<dbReference type="IntAct" id="Q812A2">
    <property type="interactions" value="4"/>
</dbReference>
<dbReference type="STRING" id="10090.ENSMUSP00000085712"/>
<dbReference type="GlyGen" id="Q812A2">
    <property type="glycosylation" value="3 sites, 2 N-linked glycans (1 site), 1 O-linked glycan (1 site)"/>
</dbReference>
<dbReference type="iPTMnet" id="Q812A2"/>
<dbReference type="PhosphoSitePlus" id="Q812A2"/>
<dbReference type="SwissPalm" id="Q812A2"/>
<dbReference type="PaxDb" id="10090-ENSMUSP00000085712"/>
<dbReference type="ProteomicsDB" id="257069"/>
<dbReference type="Pumba" id="Q812A2"/>
<dbReference type="DNASU" id="259302"/>
<dbReference type="GeneID" id="259302"/>
<dbReference type="KEGG" id="mmu:259302"/>
<dbReference type="AGR" id="MGI:2152938"/>
<dbReference type="CTD" id="9901"/>
<dbReference type="MGI" id="MGI:2152938">
    <property type="gene designation" value="Srgap3"/>
</dbReference>
<dbReference type="eggNOG" id="KOG3565">
    <property type="taxonomic scope" value="Eukaryota"/>
</dbReference>
<dbReference type="InParanoid" id="Q812A2"/>
<dbReference type="OrthoDB" id="5981864at2759"/>
<dbReference type="PhylomeDB" id="Q812A2"/>
<dbReference type="Reactome" id="R-MMU-9013148">
    <property type="pathway name" value="CDC42 GTPase cycle"/>
</dbReference>
<dbReference type="Reactome" id="R-MMU-9013149">
    <property type="pathway name" value="RAC1 GTPase cycle"/>
</dbReference>
<dbReference type="BioGRID-ORCS" id="259302">
    <property type="hits" value="3 hits in 79 CRISPR screens"/>
</dbReference>
<dbReference type="CD-CODE" id="CE726F99">
    <property type="entry name" value="Postsynaptic density"/>
</dbReference>
<dbReference type="ChiTaRS" id="Srgap3">
    <property type="organism name" value="mouse"/>
</dbReference>
<dbReference type="PRO" id="PR:Q812A2"/>
<dbReference type="Proteomes" id="UP000000589">
    <property type="component" value="Unplaced"/>
</dbReference>
<dbReference type="RNAct" id="Q812A2">
    <property type="molecule type" value="protein"/>
</dbReference>
<dbReference type="GO" id="GO:0098978">
    <property type="term" value="C:glutamatergic synapse"/>
    <property type="evidence" value="ECO:0000314"/>
    <property type="project" value="SynGO"/>
</dbReference>
<dbReference type="GO" id="GO:0005096">
    <property type="term" value="F:GTPase activator activity"/>
    <property type="evidence" value="ECO:0007669"/>
    <property type="project" value="UniProtKB-KW"/>
</dbReference>
<dbReference type="GO" id="GO:0150052">
    <property type="term" value="P:regulation of postsynapse assembly"/>
    <property type="evidence" value="ECO:0000314"/>
    <property type="project" value="SynGO"/>
</dbReference>
<dbReference type="GO" id="GO:0007165">
    <property type="term" value="P:signal transduction"/>
    <property type="evidence" value="ECO:0007669"/>
    <property type="project" value="InterPro"/>
</dbReference>
<dbReference type="CDD" id="cd07684">
    <property type="entry name" value="F-BAR_srGAP3"/>
    <property type="match status" value="1"/>
</dbReference>
<dbReference type="CDD" id="cd04383">
    <property type="entry name" value="RhoGAP_srGAP"/>
    <property type="match status" value="1"/>
</dbReference>
<dbReference type="CDD" id="cd11955">
    <property type="entry name" value="SH3_srGAP1-3"/>
    <property type="match status" value="1"/>
</dbReference>
<dbReference type="FunFam" id="1.10.555.10:FF:000013">
    <property type="entry name" value="SLIT-ROBO Rho GTPase activating protein 3"/>
    <property type="match status" value="1"/>
</dbReference>
<dbReference type="FunFam" id="1.20.1270.60:FF:000020">
    <property type="entry name" value="SLIT-ROBO Rho GTPase activating protein 3"/>
    <property type="match status" value="1"/>
</dbReference>
<dbReference type="FunFam" id="2.30.30.40:FF:000005">
    <property type="entry name" value="SLIT-ROBO Rho GTPase-activating protein 1 isoform 2"/>
    <property type="match status" value="1"/>
</dbReference>
<dbReference type="Gene3D" id="1.20.1270.60">
    <property type="entry name" value="Arfaptin homology (AH) domain/BAR domain"/>
    <property type="match status" value="1"/>
</dbReference>
<dbReference type="Gene3D" id="1.10.555.10">
    <property type="entry name" value="Rho GTPase activation protein"/>
    <property type="match status" value="1"/>
</dbReference>
<dbReference type="Gene3D" id="2.30.30.40">
    <property type="entry name" value="SH3 Domains"/>
    <property type="match status" value="1"/>
</dbReference>
<dbReference type="InterPro" id="IPR027267">
    <property type="entry name" value="AH/BAR_dom_sf"/>
</dbReference>
<dbReference type="InterPro" id="IPR031160">
    <property type="entry name" value="F_BAR"/>
</dbReference>
<dbReference type="InterPro" id="IPR001060">
    <property type="entry name" value="FCH_dom"/>
</dbReference>
<dbReference type="InterPro" id="IPR008936">
    <property type="entry name" value="Rho_GTPase_activation_prot"/>
</dbReference>
<dbReference type="InterPro" id="IPR000198">
    <property type="entry name" value="RhoGAP_dom"/>
</dbReference>
<dbReference type="InterPro" id="IPR036028">
    <property type="entry name" value="SH3-like_dom_sf"/>
</dbReference>
<dbReference type="InterPro" id="IPR001452">
    <property type="entry name" value="SH3_domain"/>
</dbReference>
<dbReference type="InterPro" id="IPR051627">
    <property type="entry name" value="SLIT-ROBO_RhoGAP"/>
</dbReference>
<dbReference type="InterPro" id="IPR035648">
    <property type="entry name" value="srGAP1/2/3_SH3"/>
</dbReference>
<dbReference type="InterPro" id="IPR049581">
    <property type="entry name" value="SrGAP3_F-BAR"/>
</dbReference>
<dbReference type="PANTHER" id="PTHR14166">
    <property type="entry name" value="SLIT-ROBO RHO GTPASE ACTIVATING PROTEIN"/>
    <property type="match status" value="1"/>
</dbReference>
<dbReference type="Pfam" id="PF00611">
    <property type="entry name" value="FCH"/>
    <property type="match status" value="1"/>
</dbReference>
<dbReference type="Pfam" id="PF00620">
    <property type="entry name" value="RhoGAP"/>
    <property type="match status" value="1"/>
</dbReference>
<dbReference type="Pfam" id="PF00018">
    <property type="entry name" value="SH3_1"/>
    <property type="match status" value="1"/>
</dbReference>
<dbReference type="SMART" id="SM00055">
    <property type="entry name" value="FCH"/>
    <property type="match status" value="1"/>
</dbReference>
<dbReference type="SMART" id="SM00324">
    <property type="entry name" value="RhoGAP"/>
    <property type="match status" value="1"/>
</dbReference>
<dbReference type="SMART" id="SM00326">
    <property type="entry name" value="SH3"/>
    <property type="match status" value="1"/>
</dbReference>
<dbReference type="SUPFAM" id="SSF103657">
    <property type="entry name" value="BAR/IMD domain-like"/>
    <property type="match status" value="1"/>
</dbReference>
<dbReference type="SUPFAM" id="SSF48350">
    <property type="entry name" value="GTPase activation domain, GAP"/>
    <property type="match status" value="1"/>
</dbReference>
<dbReference type="SUPFAM" id="SSF50044">
    <property type="entry name" value="SH3-domain"/>
    <property type="match status" value="1"/>
</dbReference>
<dbReference type="PROSITE" id="PS51741">
    <property type="entry name" value="F_BAR"/>
    <property type="match status" value="1"/>
</dbReference>
<dbReference type="PROSITE" id="PS50238">
    <property type="entry name" value="RHOGAP"/>
    <property type="match status" value="1"/>
</dbReference>
<dbReference type="PROSITE" id="PS50002">
    <property type="entry name" value="SH3"/>
    <property type="match status" value="1"/>
</dbReference>
<keyword id="KW-0175">Coiled coil</keyword>
<keyword id="KW-0343">GTPase activation</keyword>
<keyword id="KW-0597">Phosphoprotein</keyword>
<keyword id="KW-1185">Reference proteome</keyword>
<keyword id="KW-0728">SH3 domain</keyword>